<evidence type="ECO:0000255" key="1">
    <source>
        <dbReference type="HAMAP-Rule" id="MF_00378"/>
    </source>
</evidence>
<protein>
    <recommendedName>
        <fullName evidence="1">Exodeoxyribonuclease 7 large subunit</fullName>
        <ecNumber evidence="1">3.1.11.6</ecNumber>
    </recommendedName>
    <alternativeName>
        <fullName evidence="1">Exodeoxyribonuclease VII large subunit</fullName>
        <shortName evidence="1">Exonuclease VII large subunit</shortName>
    </alternativeName>
</protein>
<comment type="function">
    <text evidence="1">Bidirectionally degrades single-stranded DNA into large acid-insoluble oligonucleotides, which are then degraded further into small acid-soluble oligonucleotides.</text>
</comment>
<comment type="catalytic activity">
    <reaction evidence="1">
        <text>Exonucleolytic cleavage in either 5'- to 3'- or 3'- to 5'-direction to yield nucleoside 5'-phosphates.</text>
        <dbReference type="EC" id="3.1.11.6"/>
    </reaction>
</comment>
<comment type="subunit">
    <text evidence="1">Heterooligomer composed of large and small subunits.</text>
</comment>
<comment type="subcellular location">
    <subcellularLocation>
        <location evidence="1">Cytoplasm</location>
    </subcellularLocation>
</comment>
<comment type="similarity">
    <text evidence="1">Belongs to the XseA family.</text>
</comment>
<feature type="chain" id="PRO_0000197867" description="Exodeoxyribonuclease 7 large subunit">
    <location>
        <begin position="1"/>
        <end position="459"/>
    </location>
</feature>
<gene>
    <name evidence="1" type="primary">xseA</name>
    <name type="ordered locus">PP_1027</name>
</gene>
<proteinExistence type="inferred from homology"/>
<name>EX7L_PSEPK</name>
<accession>Q88P26</accession>
<keyword id="KW-0963">Cytoplasm</keyword>
<keyword id="KW-0269">Exonuclease</keyword>
<keyword id="KW-0378">Hydrolase</keyword>
<keyword id="KW-0540">Nuclease</keyword>
<keyword id="KW-1185">Reference proteome</keyword>
<dbReference type="EC" id="3.1.11.6" evidence="1"/>
<dbReference type="EMBL" id="AE015451">
    <property type="protein sequence ID" value="AAN66652.1"/>
    <property type="molecule type" value="Genomic_DNA"/>
</dbReference>
<dbReference type="RefSeq" id="NP_743188.1">
    <property type="nucleotide sequence ID" value="NC_002947.4"/>
</dbReference>
<dbReference type="RefSeq" id="WP_010952206.1">
    <property type="nucleotide sequence ID" value="NC_002947.4"/>
</dbReference>
<dbReference type="SMR" id="Q88P26"/>
<dbReference type="STRING" id="160488.PP_1027"/>
<dbReference type="PaxDb" id="160488-PP_1027"/>
<dbReference type="KEGG" id="ppu:PP_1027"/>
<dbReference type="PATRIC" id="fig|160488.4.peg.1090"/>
<dbReference type="eggNOG" id="COG1570">
    <property type="taxonomic scope" value="Bacteria"/>
</dbReference>
<dbReference type="HOGENOM" id="CLU_023625_3_1_6"/>
<dbReference type="OrthoDB" id="9802795at2"/>
<dbReference type="PhylomeDB" id="Q88P26"/>
<dbReference type="BioCyc" id="PPUT160488:G1G01-1100-MONOMER"/>
<dbReference type="Proteomes" id="UP000000556">
    <property type="component" value="Chromosome"/>
</dbReference>
<dbReference type="GO" id="GO:0005737">
    <property type="term" value="C:cytoplasm"/>
    <property type="evidence" value="ECO:0007669"/>
    <property type="project" value="UniProtKB-SubCell"/>
</dbReference>
<dbReference type="GO" id="GO:0009318">
    <property type="term" value="C:exodeoxyribonuclease VII complex"/>
    <property type="evidence" value="ECO:0007669"/>
    <property type="project" value="InterPro"/>
</dbReference>
<dbReference type="GO" id="GO:0008855">
    <property type="term" value="F:exodeoxyribonuclease VII activity"/>
    <property type="evidence" value="ECO:0007669"/>
    <property type="project" value="UniProtKB-UniRule"/>
</dbReference>
<dbReference type="GO" id="GO:0003676">
    <property type="term" value="F:nucleic acid binding"/>
    <property type="evidence" value="ECO:0007669"/>
    <property type="project" value="InterPro"/>
</dbReference>
<dbReference type="GO" id="GO:0006308">
    <property type="term" value="P:DNA catabolic process"/>
    <property type="evidence" value="ECO:0007669"/>
    <property type="project" value="UniProtKB-UniRule"/>
</dbReference>
<dbReference type="CDD" id="cd04489">
    <property type="entry name" value="ExoVII_LU_OBF"/>
    <property type="match status" value="1"/>
</dbReference>
<dbReference type="Gene3D" id="2.40.50.1010">
    <property type="match status" value="1"/>
</dbReference>
<dbReference type="HAMAP" id="MF_00378">
    <property type="entry name" value="Exonuc_7_L"/>
    <property type="match status" value="1"/>
</dbReference>
<dbReference type="InterPro" id="IPR003753">
    <property type="entry name" value="Exonuc_VII_L"/>
</dbReference>
<dbReference type="InterPro" id="IPR020579">
    <property type="entry name" value="Exonuc_VII_lsu_C"/>
</dbReference>
<dbReference type="InterPro" id="IPR025824">
    <property type="entry name" value="OB-fold_nuc-bd_dom"/>
</dbReference>
<dbReference type="NCBIfam" id="TIGR00237">
    <property type="entry name" value="xseA"/>
    <property type="match status" value="1"/>
</dbReference>
<dbReference type="PANTHER" id="PTHR30008">
    <property type="entry name" value="EXODEOXYRIBONUCLEASE 7 LARGE SUBUNIT"/>
    <property type="match status" value="1"/>
</dbReference>
<dbReference type="PANTHER" id="PTHR30008:SF0">
    <property type="entry name" value="EXODEOXYRIBONUCLEASE 7 LARGE SUBUNIT"/>
    <property type="match status" value="1"/>
</dbReference>
<dbReference type="Pfam" id="PF02601">
    <property type="entry name" value="Exonuc_VII_L"/>
    <property type="match status" value="1"/>
</dbReference>
<dbReference type="Pfam" id="PF13742">
    <property type="entry name" value="tRNA_anti_2"/>
    <property type="match status" value="1"/>
</dbReference>
<organism>
    <name type="scientific">Pseudomonas putida (strain ATCC 47054 / DSM 6125 / CFBP 8728 / NCIMB 11950 / KT2440)</name>
    <dbReference type="NCBI Taxonomy" id="160488"/>
    <lineage>
        <taxon>Bacteria</taxon>
        <taxon>Pseudomonadati</taxon>
        <taxon>Pseudomonadota</taxon>
        <taxon>Gammaproteobacteria</taxon>
        <taxon>Pseudomonadales</taxon>
        <taxon>Pseudomonadaceae</taxon>
        <taxon>Pseudomonas</taxon>
    </lineage>
</organism>
<reference key="1">
    <citation type="journal article" date="2002" name="Environ. Microbiol.">
        <title>Complete genome sequence and comparative analysis of the metabolically versatile Pseudomonas putida KT2440.</title>
        <authorList>
            <person name="Nelson K.E."/>
            <person name="Weinel C."/>
            <person name="Paulsen I.T."/>
            <person name="Dodson R.J."/>
            <person name="Hilbert H."/>
            <person name="Martins dos Santos V.A.P."/>
            <person name="Fouts D.E."/>
            <person name="Gill S.R."/>
            <person name="Pop M."/>
            <person name="Holmes M."/>
            <person name="Brinkac L.M."/>
            <person name="Beanan M.J."/>
            <person name="DeBoy R.T."/>
            <person name="Daugherty S.C."/>
            <person name="Kolonay J.F."/>
            <person name="Madupu R."/>
            <person name="Nelson W.C."/>
            <person name="White O."/>
            <person name="Peterson J.D."/>
            <person name="Khouri H.M."/>
            <person name="Hance I."/>
            <person name="Chris Lee P."/>
            <person name="Holtzapple E.K."/>
            <person name="Scanlan D."/>
            <person name="Tran K."/>
            <person name="Moazzez A."/>
            <person name="Utterback T.R."/>
            <person name="Rizzo M."/>
            <person name="Lee K."/>
            <person name="Kosack D."/>
            <person name="Moestl D."/>
            <person name="Wedler H."/>
            <person name="Lauber J."/>
            <person name="Stjepandic D."/>
            <person name="Hoheisel J."/>
            <person name="Straetz M."/>
            <person name="Heim S."/>
            <person name="Kiewitz C."/>
            <person name="Eisen J.A."/>
            <person name="Timmis K.N."/>
            <person name="Duesterhoeft A."/>
            <person name="Tuemmler B."/>
            <person name="Fraser C.M."/>
        </authorList>
    </citation>
    <scope>NUCLEOTIDE SEQUENCE [LARGE SCALE GENOMIC DNA]</scope>
    <source>
        <strain>ATCC 47054 / DSM 6125 / CFBP 8728 / NCIMB 11950 / KT2440</strain>
    </source>
</reference>
<sequence length="459" mass="51388">MIKDPFERLGLDREVLTVSQLNGRARVLLEDVFRSVWVEGEISNLARPASGHMYFTLKDSGAQVRCALFRQNATRVRQALRDGLAVRVRGKVSLFEGRGDYQLILDTVEPAGDGALRLAFEALKEKLGAEGLFSAERKKPLPAHPQRIGIITSPTGAVIRDIISVFGRRAPQVELNLIPTAVQGREAIAQIVRAIRLADSLGFDALILARGGGSLEDLWCFNEEAVARAVAACVTPIVSAVGHETDVSISDFVADVRAPTPSAAAELLAPDNSGLRQRLDGLQRRLLLRMQNRLTHDRLRLESLTRRLRHPGERLRQRAQRLDDLDMRLRRAFMLNLNQRRERLARLDARLAAQHPGRNLKLLNQRLDSLAERLPRAMREVLKDRRQRFQAQLQTLQVVSPLATLARGYSILLDEQGQAIRSAEQTRNGQRLTARLNEGELLVRVEDNHLTPVTLSLLD</sequence>